<gene>
    <name type="primary">CITED1</name>
    <name type="synonym">MSG1</name>
</gene>
<sequence length="195" mass="19998">MPTMSRPALDVKGGTSPVKENANPEMNSLAYSNLGVKDRKAVAILHYPGVASNGTKASGAPTSSSGSPSPISSSTATPPTKPPPFNLHPAPHLLASMQLQKLNSQYHGMAAATPGQPGEAEPLPNWGFGAQAGGAGSLSPSAGAQSPAIIDSDPVDEEVLMSLVVELGLDRANELPELWLGQNEFDFTADFPSGS</sequence>
<name>CITE1_BOVIN</name>
<protein>
    <recommendedName>
        <fullName>Cbp/p300-interacting transactivator 1</fullName>
    </recommendedName>
    <alternativeName>
        <fullName>Melanocyte-specific protein 1</fullName>
    </alternativeName>
</protein>
<comment type="function">
    <text evidence="1">Transcriptional coactivator of the p300/CBP-mediated transcription complex. Enhances SMAD-mediated transcription by strengthening the functional link between the DNA-binding SMAD transcription factors and the p300/CBP transcription coactivator complex. Stimulates estrogen-dependent transactivation activity mediated by estrogen receptors signaling; stabilizes the interaction of estrogen receptor ESR1 and histone acetyltransferase EP300. Positively regulates TGF-beta signaling through its association with the SMAD/p300/CBP-mediated transcriptional coactivator complex. Induces transcription from estrogen-responsive promoters and protection against cell death. Potentiates EGR2-mediated transcriptional activation activity from the ERBB2 promoter. Acts as an inhibitor of osteoblastic mineralization through a cAMP-dependent parathyroid hormone receptor signaling. May play a role in pigmentation of melanocytes. Associates with chromatin to the estrogen-responsive TGF-alpha promoter region in a estrogen-dependent manner (By similarity).</text>
</comment>
<comment type="subunit">
    <text evidence="1">Interacts (via C-terminus) with CREBBP. Interacts with EGR2. Homodimer. Binds to RBM14. Interacts (via N-terminus) with HSPA8; the interaction suppresses the association of CITED1 with p300/CBP and SMAD-mediated transcription transactivation. Interacts (via C-terminus) with TOX3 (via HGM box); the interaction increases estrogen-response element (ERE)-dependent transcription and protection against cell death. Interacts with ESR1; the interaction occurs in a estrogen-dependent manner (By similarity). Interacts (unphosphorylated form preferentially and via C-terminus) with EP300 (By similarity).</text>
</comment>
<comment type="subcellular location">
    <subcellularLocation>
        <location evidence="1">Nucleus</location>
    </subcellularLocation>
    <subcellularLocation>
        <location evidence="1">Cytoplasm</location>
    </subcellularLocation>
    <text evidence="1">Shuttles between the nucleus and the cytoplasm by a nuclear export signal and (NES) in a CRM1-dependent manner.</text>
</comment>
<comment type="PTM">
    <text evidence="1">Phosphorylated. Phosphorylation changes in a cell cycle-dependent manner and reduces its transcriptional cofactor activity (By similarity).</text>
</comment>
<comment type="similarity">
    <text evidence="3">Belongs to the CITED family.</text>
</comment>
<accession>Q9BDI3</accession>
<evidence type="ECO:0000250" key="1"/>
<evidence type="ECO:0000256" key="2">
    <source>
        <dbReference type="SAM" id="MobiDB-lite"/>
    </source>
</evidence>
<evidence type="ECO:0000305" key="3"/>
<proteinExistence type="evidence at transcript level"/>
<reference key="1">
    <citation type="submission" date="2001-03" db="EMBL/GenBank/DDBJ databases">
        <title>Structural and functional conservation of MRG family in system evolution.</title>
        <authorList>
            <person name="Zhuang D.Z."/>
            <person name="Chou Y.-T."/>
            <person name="Yang Y.-C."/>
        </authorList>
    </citation>
    <scope>NUCLEOTIDE SEQUENCE [MRNA]</scope>
</reference>
<reference key="2">
    <citation type="submission" date="2005-08" db="EMBL/GenBank/DDBJ databases">
        <authorList>
            <consortium name="NIH - Mammalian Gene Collection (MGC) project"/>
        </authorList>
    </citation>
    <scope>NUCLEOTIDE SEQUENCE [LARGE SCALE MRNA]</scope>
    <source>
        <strain>Crossbred X Angus</strain>
        <tissue>Liver</tissue>
    </source>
</reference>
<dbReference type="EMBL" id="AF362075">
    <property type="protein sequence ID" value="AAK27241.1"/>
    <property type="molecule type" value="mRNA"/>
</dbReference>
<dbReference type="EMBL" id="BC102725">
    <property type="protein sequence ID" value="AAI02726.1"/>
    <property type="molecule type" value="mRNA"/>
</dbReference>
<dbReference type="RefSeq" id="NP_776943.1">
    <property type="nucleotide sequence ID" value="NM_174518.1"/>
</dbReference>
<dbReference type="RefSeq" id="XP_005228045.2">
    <property type="nucleotide sequence ID" value="XM_005227988.5"/>
</dbReference>
<dbReference type="RefSeq" id="XP_005228047.1">
    <property type="nucleotide sequence ID" value="XM_005227990.4"/>
</dbReference>
<dbReference type="RefSeq" id="XP_005228048.1">
    <property type="nucleotide sequence ID" value="XM_005227991.5"/>
</dbReference>
<dbReference type="RefSeq" id="XP_010820139.1">
    <property type="nucleotide sequence ID" value="XM_010821837.4"/>
</dbReference>
<dbReference type="RefSeq" id="XP_010820140.1">
    <property type="nucleotide sequence ID" value="XM_010821838.2"/>
</dbReference>
<dbReference type="RefSeq" id="XP_015317125.1">
    <property type="nucleotide sequence ID" value="XM_015461639.3"/>
</dbReference>
<dbReference type="RefSeq" id="XP_024843536.1">
    <property type="nucleotide sequence ID" value="XM_024987768.2"/>
</dbReference>
<dbReference type="RefSeq" id="XP_059739268.1">
    <property type="nucleotide sequence ID" value="XM_059883285.1"/>
</dbReference>
<dbReference type="FunCoup" id="Q9BDI3">
    <property type="interactions" value="138"/>
</dbReference>
<dbReference type="STRING" id="9913.ENSBTAP00000055759"/>
<dbReference type="PaxDb" id="9913-ENSBTAP00000055749"/>
<dbReference type="Ensembl" id="ENSBTAT00000062996.3">
    <property type="protein sequence ID" value="ENSBTAP00000055749.1"/>
    <property type="gene ID" value="ENSBTAG00000045925.3"/>
</dbReference>
<dbReference type="GeneID" id="282182"/>
<dbReference type="KEGG" id="bta:282182"/>
<dbReference type="CTD" id="4435"/>
<dbReference type="VEuPathDB" id="HostDB:ENSBTAG00000045925"/>
<dbReference type="VGNC" id="VGNC:27376">
    <property type="gene designation" value="CITED1"/>
</dbReference>
<dbReference type="eggNOG" id="ENOG502RZBF">
    <property type="taxonomic scope" value="Eukaryota"/>
</dbReference>
<dbReference type="GeneTree" id="ENSGT00530000063624"/>
<dbReference type="HOGENOM" id="CLU_100627_0_0_1"/>
<dbReference type="InParanoid" id="Q9BDI3"/>
<dbReference type="OrthoDB" id="8939897at2759"/>
<dbReference type="TreeFam" id="TF331915"/>
<dbReference type="Reactome" id="R-BTA-8866907">
    <property type="pathway name" value="Activation of the TFAP2 (AP-2) family of transcription factors"/>
</dbReference>
<dbReference type="Reactome" id="R-BTA-9018519">
    <property type="pathway name" value="Estrogen-dependent gene expression"/>
</dbReference>
<dbReference type="Proteomes" id="UP000009136">
    <property type="component" value="Chromosome X"/>
</dbReference>
<dbReference type="Bgee" id="ENSBTAG00000045925">
    <property type="expression patterns" value="Expressed in granulosa cell and 99 other cell types or tissues"/>
</dbReference>
<dbReference type="GO" id="GO:0005737">
    <property type="term" value="C:cytoplasm"/>
    <property type="evidence" value="ECO:0007669"/>
    <property type="project" value="UniProtKB-SubCell"/>
</dbReference>
<dbReference type="GO" id="GO:0005634">
    <property type="term" value="C:nucleus"/>
    <property type="evidence" value="ECO:0000250"/>
    <property type="project" value="UniProtKB"/>
</dbReference>
<dbReference type="GO" id="GO:0003682">
    <property type="term" value="F:chromatin binding"/>
    <property type="evidence" value="ECO:0000250"/>
    <property type="project" value="UniProtKB"/>
</dbReference>
<dbReference type="GO" id="GO:0042803">
    <property type="term" value="F:protein homodimerization activity"/>
    <property type="evidence" value="ECO:0000250"/>
    <property type="project" value="UniProtKB"/>
</dbReference>
<dbReference type="GO" id="GO:0003713">
    <property type="term" value="F:transcription coactivator activity"/>
    <property type="evidence" value="ECO:0000250"/>
    <property type="project" value="UniProtKB"/>
</dbReference>
<dbReference type="GO" id="GO:0006915">
    <property type="term" value="P:apoptotic process"/>
    <property type="evidence" value="ECO:0007669"/>
    <property type="project" value="UniProtKB-KW"/>
</dbReference>
<dbReference type="GO" id="GO:0001658">
    <property type="term" value="P:branching involved in ureteric bud morphogenesis"/>
    <property type="evidence" value="ECO:0000250"/>
    <property type="project" value="UniProtKB"/>
</dbReference>
<dbReference type="GO" id="GO:0030318">
    <property type="term" value="P:melanocyte differentiation"/>
    <property type="evidence" value="ECO:0000318"/>
    <property type="project" value="GO_Central"/>
</dbReference>
<dbReference type="GO" id="GO:0045892">
    <property type="term" value="P:negative regulation of DNA-templated transcription"/>
    <property type="evidence" value="ECO:0000250"/>
    <property type="project" value="UniProtKB"/>
</dbReference>
<dbReference type="GO" id="GO:0043524">
    <property type="term" value="P:negative regulation of neuron apoptotic process"/>
    <property type="evidence" value="ECO:0000250"/>
    <property type="project" value="UniProtKB"/>
</dbReference>
<dbReference type="GO" id="GO:0006913">
    <property type="term" value="P:nucleocytoplasmic transport"/>
    <property type="evidence" value="ECO:0000250"/>
    <property type="project" value="UniProtKB"/>
</dbReference>
<dbReference type="GO" id="GO:0045893">
    <property type="term" value="P:positive regulation of DNA-templated transcription"/>
    <property type="evidence" value="ECO:0000250"/>
    <property type="project" value="UniProtKB"/>
</dbReference>
<dbReference type="GO" id="GO:0071559">
    <property type="term" value="P:response to transforming growth factor beta"/>
    <property type="evidence" value="ECO:0000250"/>
    <property type="project" value="UniProtKB"/>
</dbReference>
<dbReference type="FunFam" id="6.10.140.2200:FF:000002">
    <property type="entry name" value="cbp/p300-interacting transactivator 1 isoform X2"/>
    <property type="match status" value="1"/>
</dbReference>
<dbReference type="Gene3D" id="6.10.140.2200">
    <property type="match status" value="1"/>
</dbReference>
<dbReference type="InterPro" id="IPR007576">
    <property type="entry name" value="CITED"/>
</dbReference>
<dbReference type="PANTHER" id="PTHR17045:SF6">
    <property type="entry name" value="CBP_P300-INTERACTING TRANSACTIVATOR 1"/>
    <property type="match status" value="1"/>
</dbReference>
<dbReference type="PANTHER" id="PTHR17045">
    <property type="entry name" value="MELANOCYTE SPECIFIC GENE RELATED CITED"/>
    <property type="match status" value="1"/>
</dbReference>
<dbReference type="Pfam" id="PF04487">
    <property type="entry name" value="CITED"/>
    <property type="match status" value="1"/>
</dbReference>
<keyword id="KW-0010">Activator</keyword>
<keyword id="KW-0053">Apoptosis</keyword>
<keyword id="KW-0963">Cytoplasm</keyword>
<keyword id="KW-0217">Developmental protein</keyword>
<keyword id="KW-0221">Differentiation</keyword>
<keyword id="KW-0539">Nucleus</keyword>
<keyword id="KW-0597">Phosphoprotein</keyword>
<keyword id="KW-1185">Reference proteome</keyword>
<keyword id="KW-0804">Transcription</keyword>
<keyword id="KW-0805">Transcription regulation</keyword>
<feature type="chain" id="PRO_0000285514" description="Cbp/p300-interacting transactivator 1">
    <location>
        <begin position="1"/>
        <end position="195"/>
    </location>
</feature>
<feature type="region of interest" description="Disordered" evidence="2">
    <location>
        <begin position="1"/>
        <end position="24"/>
    </location>
</feature>
<feature type="region of interest" description="Disordered" evidence="2">
    <location>
        <begin position="51"/>
        <end position="149"/>
    </location>
</feature>
<feature type="short sequence motif" description="Nuclear export signal" evidence="1">
    <location>
        <begin position="160"/>
        <end position="169"/>
    </location>
</feature>
<feature type="compositionally biased region" description="Low complexity" evidence="2">
    <location>
        <begin position="54"/>
        <end position="78"/>
    </location>
</feature>
<feature type="compositionally biased region" description="Polar residues" evidence="2">
    <location>
        <begin position="97"/>
        <end position="106"/>
    </location>
</feature>
<feature type="compositionally biased region" description="Low complexity" evidence="2">
    <location>
        <begin position="137"/>
        <end position="148"/>
    </location>
</feature>
<organism>
    <name type="scientific">Bos taurus</name>
    <name type="common">Bovine</name>
    <dbReference type="NCBI Taxonomy" id="9913"/>
    <lineage>
        <taxon>Eukaryota</taxon>
        <taxon>Metazoa</taxon>
        <taxon>Chordata</taxon>
        <taxon>Craniata</taxon>
        <taxon>Vertebrata</taxon>
        <taxon>Euteleostomi</taxon>
        <taxon>Mammalia</taxon>
        <taxon>Eutheria</taxon>
        <taxon>Laurasiatheria</taxon>
        <taxon>Artiodactyla</taxon>
        <taxon>Ruminantia</taxon>
        <taxon>Pecora</taxon>
        <taxon>Bovidae</taxon>
        <taxon>Bovinae</taxon>
        <taxon>Bos</taxon>
    </lineage>
</organism>